<name>MTX1_HUMAN</name>
<comment type="function">
    <text evidence="1">Involved in transport of proteins into the mitochondrion. Essential for embryonic development (By similarity).</text>
</comment>
<comment type="subunit">
    <text evidence="4 5 7 8">Interacts with MTX2/metaxin-2. Associates with the mitochondrial contact site and cristae organizing system (MICOS) complex, composed of at least MICOS10/MIC10, CHCHD3/MIC19, CHCHD6/MIC25, APOOL/MIC27, IMMT/MIC60, APOO/MIC23/MIC26 and QIL1/MIC13. This complex was also known under the names MINOS or MitOS complex. The MICOS complex associates with mitochondrial outer membrane proteins SAMM50, MTX1 and MTX2 (together described as components of the mitochondrial outer membrane sorting assembly machinery (SAM) complex) and DNAJC11, mitochondrial inner membrane protein TMEM11 and with HSPA9. The MICOS and SAM complexes together with DNAJC11 are part of a large protein complex spanning both membranes termed the mitochondrial intermembrane space bridging (MIB) complex. Interacts with ARMC1 (PubMed:31644573).</text>
</comment>
<comment type="subcellular location">
    <subcellularLocation>
        <location evidence="12">Membrane</location>
        <topology evidence="12">Single-pass type I membrane protein</topology>
    </subcellularLocation>
    <subcellularLocation>
        <location evidence="1">Mitochondrion outer membrane</location>
    </subcellularLocation>
</comment>
<comment type="alternative products">
    <event type="alternative splicing"/>
    <isoform>
        <id>Q13505-1</id>
        <name>1</name>
        <sequence type="displayed"/>
    </isoform>
    <isoform>
        <id>Q13505-2</id>
        <name>2</name>
        <sequence type="described" ref="VSP_035742"/>
    </isoform>
    <isoform>
        <id>Q13505-3</id>
        <name>3</name>
        <sequence type="described" ref="VSP_035741"/>
    </isoform>
</comment>
<comment type="PTM">
    <text evidence="6">Ubiquitinated by PRKN during mitophagy, leading to its degradation and enhancement of mitophagy. Deubiquitinated by USP30.</text>
</comment>
<comment type="similarity">
    <text evidence="12">Belongs to the metaxin family.</text>
</comment>
<sequence>MLLGGPPRSPRSGTSPKGPWSSTGHVQFGKSPQTWPRRTRPRSPEPAAPSGVRGSTWTRRRDSPRRAGPTALSRYVGHLWMGRRPPSPEARGPVPRSSAASRARRSLASPGISPGPLTATIGGAVAGGGPRQGRAEAHKEVFPGQRVGKMAAPMELFCWSGGWGLPSVDLDSLAVLTYARFTGAPLKVHKISNPWQSPSGTLPALRTSHGEVISVPHKIITHLRKEKYNADYDLSARQGADTLAFMSLLEEKLLPVLVHTFWIDTKNYVEVTRKWYAEAMPFPLNFFLPGRMQRQYMERLQLLTGEHRPEDEEELEKELYREARECLTLLSQRLGSQKFFFGDAPASLDAFVFSYLALLLQAKLPSGKLQVHLRGLHNLCAYCTHILSLYFPWDGAEVPPQRQTPAGPETEEEPYRRRNQILSVLAGLAAMVGYALLSGIVSIQRATPARAPGTRTLGMAEEDEEE</sequence>
<keyword id="KW-0025">Alternative splicing</keyword>
<keyword id="KW-1017">Isopeptide bond</keyword>
<keyword id="KW-0472">Membrane</keyword>
<keyword id="KW-0496">Mitochondrion</keyword>
<keyword id="KW-1000">Mitochondrion outer membrane</keyword>
<keyword id="KW-0653">Protein transport</keyword>
<keyword id="KW-1267">Proteomics identification</keyword>
<keyword id="KW-1185">Reference proteome</keyword>
<keyword id="KW-0812">Transmembrane</keyword>
<keyword id="KW-1133">Transmembrane helix</keyword>
<keyword id="KW-0813">Transport</keyword>
<keyword id="KW-0832">Ubl conjugation</keyword>
<proteinExistence type="evidence at protein level"/>
<evidence type="ECO:0000250" key="1"/>
<evidence type="ECO:0000255" key="2"/>
<evidence type="ECO:0000256" key="3">
    <source>
        <dbReference type="SAM" id="MobiDB-lite"/>
    </source>
</evidence>
<evidence type="ECO:0000269" key="4">
    <source>
    </source>
</evidence>
<evidence type="ECO:0000269" key="5">
    <source>
    </source>
</evidence>
<evidence type="ECO:0000269" key="6">
    <source>
    </source>
</evidence>
<evidence type="ECO:0000269" key="7">
    <source>
    </source>
</evidence>
<evidence type="ECO:0000269" key="8">
    <source>
    </source>
</evidence>
<evidence type="ECO:0000303" key="9">
    <source>
    </source>
</evidence>
<evidence type="ECO:0000303" key="10">
    <source>
    </source>
</evidence>
<evidence type="ECO:0000303" key="11">
    <source>
    </source>
</evidence>
<evidence type="ECO:0000305" key="12"/>
<reference key="1">
    <citation type="journal article" date="1996" name="Genomics">
        <title>Structure and organization of the human metaxin gene (MTX) and pseudogene.</title>
        <authorList>
            <person name="Long G.L."/>
            <person name="Winfield S.L."/>
            <person name="Adolph K.W."/>
            <person name="Ginns E.I."/>
            <person name="Bornstein P."/>
        </authorList>
    </citation>
    <scope>NUCLEOTIDE SEQUENCE [GENOMIC DNA / MRNA] (ISOFORM 3)</scope>
</reference>
<reference key="2">
    <citation type="journal article" date="1997" name="Genome Res.">
        <title>Identification of three additional genes contiguous to the glucocerebrosidase locus on chromosome 1q21: implications for Gaucher disease.</title>
        <authorList>
            <person name="Winfield S.L."/>
            <person name="Tayebi N."/>
            <person name="Martin B.M."/>
            <person name="Ginns E.I."/>
            <person name="Sidransky E."/>
        </authorList>
    </citation>
    <scope>NUCLEOTIDE SEQUENCE [GENOMIC DNA] (ISOFORM 3)</scope>
</reference>
<reference key="3">
    <citation type="journal article" date="2004" name="Nat. Genet.">
        <title>Complete sequencing and characterization of 21,243 full-length human cDNAs.</title>
        <authorList>
            <person name="Ota T."/>
            <person name="Suzuki Y."/>
            <person name="Nishikawa T."/>
            <person name="Otsuki T."/>
            <person name="Sugiyama T."/>
            <person name="Irie R."/>
            <person name="Wakamatsu A."/>
            <person name="Hayashi K."/>
            <person name="Sato H."/>
            <person name="Nagai K."/>
            <person name="Kimura K."/>
            <person name="Makita H."/>
            <person name="Sekine M."/>
            <person name="Obayashi M."/>
            <person name="Nishi T."/>
            <person name="Shibahara T."/>
            <person name="Tanaka T."/>
            <person name="Ishii S."/>
            <person name="Yamamoto J."/>
            <person name="Saito K."/>
            <person name="Kawai Y."/>
            <person name="Isono Y."/>
            <person name="Nakamura Y."/>
            <person name="Nagahari K."/>
            <person name="Murakami K."/>
            <person name="Yasuda T."/>
            <person name="Iwayanagi T."/>
            <person name="Wagatsuma M."/>
            <person name="Shiratori A."/>
            <person name="Sudo H."/>
            <person name="Hosoiri T."/>
            <person name="Kaku Y."/>
            <person name="Kodaira H."/>
            <person name="Kondo H."/>
            <person name="Sugawara M."/>
            <person name="Takahashi M."/>
            <person name="Kanda K."/>
            <person name="Yokoi T."/>
            <person name="Furuya T."/>
            <person name="Kikkawa E."/>
            <person name="Omura Y."/>
            <person name="Abe K."/>
            <person name="Kamihara K."/>
            <person name="Katsuta N."/>
            <person name="Sato K."/>
            <person name="Tanikawa M."/>
            <person name="Yamazaki M."/>
            <person name="Ninomiya K."/>
            <person name="Ishibashi T."/>
            <person name="Yamashita H."/>
            <person name="Murakawa K."/>
            <person name="Fujimori K."/>
            <person name="Tanai H."/>
            <person name="Kimata M."/>
            <person name="Watanabe M."/>
            <person name="Hiraoka S."/>
            <person name="Chiba Y."/>
            <person name="Ishida S."/>
            <person name="Ono Y."/>
            <person name="Takiguchi S."/>
            <person name="Watanabe S."/>
            <person name="Yosida M."/>
            <person name="Hotuta T."/>
            <person name="Kusano J."/>
            <person name="Kanehori K."/>
            <person name="Takahashi-Fujii A."/>
            <person name="Hara H."/>
            <person name="Tanase T.-O."/>
            <person name="Nomura Y."/>
            <person name="Togiya S."/>
            <person name="Komai F."/>
            <person name="Hara R."/>
            <person name="Takeuchi K."/>
            <person name="Arita M."/>
            <person name="Imose N."/>
            <person name="Musashino K."/>
            <person name="Yuuki H."/>
            <person name="Oshima A."/>
            <person name="Sasaki N."/>
            <person name="Aotsuka S."/>
            <person name="Yoshikawa Y."/>
            <person name="Matsunawa H."/>
            <person name="Ichihara T."/>
            <person name="Shiohata N."/>
            <person name="Sano S."/>
            <person name="Moriya S."/>
            <person name="Momiyama H."/>
            <person name="Satoh N."/>
            <person name="Takami S."/>
            <person name="Terashima Y."/>
            <person name="Suzuki O."/>
            <person name="Nakagawa S."/>
            <person name="Senoh A."/>
            <person name="Mizoguchi H."/>
            <person name="Goto Y."/>
            <person name="Shimizu F."/>
            <person name="Wakebe H."/>
            <person name="Hishigaki H."/>
            <person name="Watanabe T."/>
            <person name="Sugiyama A."/>
            <person name="Takemoto M."/>
            <person name="Kawakami B."/>
            <person name="Yamazaki M."/>
            <person name="Watanabe K."/>
            <person name="Kumagai A."/>
            <person name="Itakura S."/>
            <person name="Fukuzumi Y."/>
            <person name="Fujimori Y."/>
            <person name="Komiyama M."/>
            <person name="Tashiro H."/>
            <person name="Tanigami A."/>
            <person name="Fujiwara T."/>
            <person name="Ono T."/>
            <person name="Yamada K."/>
            <person name="Fujii Y."/>
            <person name="Ozaki K."/>
            <person name="Hirao M."/>
            <person name="Ohmori Y."/>
            <person name="Kawabata A."/>
            <person name="Hikiji T."/>
            <person name="Kobatake N."/>
            <person name="Inagaki H."/>
            <person name="Ikema Y."/>
            <person name="Okamoto S."/>
            <person name="Okitani R."/>
            <person name="Kawakami T."/>
            <person name="Noguchi S."/>
            <person name="Itoh T."/>
            <person name="Shigeta K."/>
            <person name="Senba T."/>
            <person name="Matsumura K."/>
            <person name="Nakajima Y."/>
            <person name="Mizuno T."/>
            <person name="Morinaga M."/>
            <person name="Sasaki M."/>
            <person name="Togashi T."/>
            <person name="Oyama M."/>
            <person name="Hata H."/>
            <person name="Watanabe M."/>
            <person name="Komatsu T."/>
            <person name="Mizushima-Sugano J."/>
            <person name="Satoh T."/>
            <person name="Shirai Y."/>
            <person name="Takahashi Y."/>
            <person name="Nakagawa K."/>
            <person name="Okumura K."/>
            <person name="Nagase T."/>
            <person name="Nomura N."/>
            <person name="Kikuchi H."/>
            <person name="Masuho Y."/>
            <person name="Yamashita R."/>
            <person name="Nakai K."/>
            <person name="Yada T."/>
            <person name="Nakamura Y."/>
            <person name="Ohara O."/>
            <person name="Isogai T."/>
            <person name="Sugano S."/>
        </authorList>
    </citation>
    <scope>NUCLEOTIDE SEQUENCE [LARGE SCALE MRNA] (ISOFORM 3)</scope>
    <source>
        <tissue>Testis</tissue>
    </source>
</reference>
<reference key="4">
    <citation type="journal article" date="2006" name="Nature">
        <title>The DNA sequence and biological annotation of human chromosome 1.</title>
        <authorList>
            <person name="Gregory S.G."/>
            <person name="Barlow K.F."/>
            <person name="McLay K.E."/>
            <person name="Kaul R."/>
            <person name="Swarbreck D."/>
            <person name="Dunham A."/>
            <person name="Scott C.E."/>
            <person name="Howe K.L."/>
            <person name="Woodfine K."/>
            <person name="Spencer C.C.A."/>
            <person name="Jones M.C."/>
            <person name="Gillson C."/>
            <person name="Searle S."/>
            <person name="Zhou Y."/>
            <person name="Kokocinski F."/>
            <person name="McDonald L."/>
            <person name="Evans R."/>
            <person name="Phillips K."/>
            <person name="Atkinson A."/>
            <person name="Cooper R."/>
            <person name="Jones C."/>
            <person name="Hall R.E."/>
            <person name="Andrews T.D."/>
            <person name="Lloyd C."/>
            <person name="Ainscough R."/>
            <person name="Almeida J.P."/>
            <person name="Ambrose K.D."/>
            <person name="Anderson F."/>
            <person name="Andrew R.W."/>
            <person name="Ashwell R.I.S."/>
            <person name="Aubin K."/>
            <person name="Babbage A.K."/>
            <person name="Bagguley C.L."/>
            <person name="Bailey J."/>
            <person name="Beasley H."/>
            <person name="Bethel G."/>
            <person name="Bird C.P."/>
            <person name="Bray-Allen S."/>
            <person name="Brown J.Y."/>
            <person name="Brown A.J."/>
            <person name="Buckley D."/>
            <person name="Burton J."/>
            <person name="Bye J."/>
            <person name="Carder C."/>
            <person name="Chapman J.C."/>
            <person name="Clark S.Y."/>
            <person name="Clarke G."/>
            <person name="Clee C."/>
            <person name="Cobley V."/>
            <person name="Collier R.E."/>
            <person name="Corby N."/>
            <person name="Coville G.J."/>
            <person name="Davies J."/>
            <person name="Deadman R."/>
            <person name="Dunn M."/>
            <person name="Earthrowl M."/>
            <person name="Ellington A.G."/>
            <person name="Errington H."/>
            <person name="Frankish A."/>
            <person name="Frankland J."/>
            <person name="French L."/>
            <person name="Garner P."/>
            <person name="Garnett J."/>
            <person name="Gay L."/>
            <person name="Ghori M.R.J."/>
            <person name="Gibson R."/>
            <person name="Gilby L.M."/>
            <person name="Gillett W."/>
            <person name="Glithero R.J."/>
            <person name="Grafham D.V."/>
            <person name="Griffiths C."/>
            <person name="Griffiths-Jones S."/>
            <person name="Grocock R."/>
            <person name="Hammond S."/>
            <person name="Harrison E.S.I."/>
            <person name="Hart E."/>
            <person name="Haugen E."/>
            <person name="Heath P.D."/>
            <person name="Holmes S."/>
            <person name="Holt K."/>
            <person name="Howden P.J."/>
            <person name="Hunt A.R."/>
            <person name="Hunt S.E."/>
            <person name="Hunter G."/>
            <person name="Isherwood J."/>
            <person name="James R."/>
            <person name="Johnson C."/>
            <person name="Johnson D."/>
            <person name="Joy A."/>
            <person name="Kay M."/>
            <person name="Kershaw J.K."/>
            <person name="Kibukawa M."/>
            <person name="Kimberley A.M."/>
            <person name="King A."/>
            <person name="Knights A.J."/>
            <person name="Lad H."/>
            <person name="Laird G."/>
            <person name="Lawlor S."/>
            <person name="Leongamornlert D.A."/>
            <person name="Lloyd D.M."/>
            <person name="Loveland J."/>
            <person name="Lovell J."/>
            <person name="Lush M.J."/>
            <person name="Lyne R."/>
            <person name="Martin S."/>
            <person name="Mashreghi-Mohammadi M."/>
            <person name="Matthews L."/>
            <person name="Matthews N.S.W."/>
            <person name="McLaren S."/>
            <person name="Milne S."/>
            <person name="Mistry S."/>
            <person name="Moore M.J.F."/>
            <person name="Nickerson T."/>
            <person name="O'Dell C.N."/>
            <person name="Oliver K."/>
            <person name="Palmeiri A."/>
            <person name="Palmer S.A."/>
            <person name="Parker A."/>
            <person name="Patel D."/>
            <person name="Pearce A.V."/>
            <person name="Peck A.I."/>
            <person name="Pelan S."/>
            <person name="Phelps K."/>
            <person name="Phillimore B.J."/>
            <person name="Plumb R."/>
            <person name="Rajan J."/>
            <person name="Raymond C."/>
            <person name="Rouse G."/>
            <person name="Saenphimmachak C."/>
            <person name="Sehra H.K."/>
            <person name="Sheridan E."/>
            <person name="Shownkeen R."/>
            <person name="Sims S."/>
            <person name="Skuce C.D."/>
            <person name="Smith M."/>
            <person name="Steward C."/>
            <person name="Subramanian S."/>
            <person name="Sycamore N."/>
            <person name="Tracey A."/>
            <person name="Tromans A."/>
            <person name="Van Helmond Z."/>
            <person name="Wall M."/>
            <person name="Wallis J.M."/>
            <person name="White S."/>
            <person name="Whitehead S.L."/>
            <person name="Wilkinson J.E."/>
            <person name="Willey D.L."/>
            <person name="Williams H."/>
            <person name="Wilming L."/>
            <person name="Wray P.W."/>
            <person name="Wu Z."/>
            <person name="Coulson A."/>
            <person name="Vaudin M."/>
            <person name="Sulston J.E."/>
            <person name="Durbin R.M."/>
            <person name="Hubbard T."/>
            <person name="Wooster R."/>
            <person name="Dunham I."/>
            <person name="Carter N.P."/>
            <person name="McVean G."/>
            <person name="Ross M.T."/>
            <person name="Harrow J."/>
            <person name="Olson M.V."/>
            <person name="Beck S."/>
            <person name="Rogers J."/>
            <person name="Bentley D.R."/>
        </authorList>
    </citation>
    <scope>NUCLEOTIDE SEQUENCE [LARGE SCALE GENOMIC DNA]</scope>
</reference>
<reference key="5">
    <citation type="submission" date="2005-09" db="EMBL/GenBank/DDBJ databases">
        <authorList>
            <person name="Mural R.J."/>
            <person name="Istrail S."/>
            <person name="Sutton G.G."/>
            <person name="Florea L."/>
            <person name="Halpern A.L."/>
            <person name="Mobarry C.M."/>
            <person name="Lippert R."/>
            <person name="Walenz B."/>
            <person name="Shatkay H."/>
            <person name="Dew I."/>
            <person name="Miller J.R."/>
            <person name="Flanigan M.J."/>
            <person name="Edwards N.J."/>
            <person name="Bolanos R."/>
            <person name="Fasulo D."/>
            <person name="Halldorsson B.V."/>
            <person name="Hannenhalli S."/>
            <person name="Turner R."/>
            <person name="Yooseph S."/>
            <person name="Lu F."/>
            <person name="Nusskern D.R."/>
            <person name="Shue B.C."/>
            <person name="Zheng X.H."/>
            <person name="Zhong F."/>
            <person name="Delcher A.L."/>
            <person name="Huson D.H."/>
            <person name="Kravitz S.A."/>
            <person name="Mouchard L."/>
            <person name="Reinert K."/>
            <person name="Remington K.A."/>
            <person name="Clark A.G."/>
            <person name="Waterman M.S."/>
            <person name="Eichler E.E."/>
            <person name="Adams M.D."/>
            <person name="Hunkapiller M.W."/>
            <person name="Myers E.W."/>
            <person name="Venter J.C."/>
        </authorList>
    </citation>
    <scope>NUCLEOTIDE SEQUENCE [LARGE SCALE GENOMIC DNA]</scope>
</reference>
<reference key="6">
    <citation type="journal article" date="2004" name="Genome Res.">
        <title>The status, quality, and expansion of the NIH full-length cDNA project: the Mammalian Gene Collection (MGC).</title>
        <authorList>
            <consortium name="The MGC Project Team"/>
        </authorList>
    </citation>
    <scope>NUCLEOTIDE SEQUENCE [LARGE SCALE MRNA] (ISOFORM 2)</scope>
    <source>
        <tissue>Placenta</tissue>
    </source>
</reference>
<reference key="7">
    <citation type="journal article" date="1999" name="J. Cell. Biochem.">
        <title>Metaxin 1 interacts with metaxin 2, a novel related protein associated with the mammalian mitochondrial outer membrane.</title>
        <authorList>
            <person name="Armstrong L.C."/>
            <person name="Saenz A.J."/>
            <person name="Bornstein P."/>
        </authorList>
    </citation>
    <scope>INTERACTION WITH MTX2</scope>
</reference>
<reference key="8">
    <citation type="journal article" date="2011" name="BMC Syst. Biol.">
        <title>Initial characterization of the human central proteome.</title>
        <authorList>
            <person name="Burkard T.R."/>
            <person name="Planyavsky M."/>
            <person name="Kaupe I."/>
            <person name="Breitwieser F.P."/>
            <person name="Buerckstuemmer T."/>
            <person name="Bennett K.L."/>
            <person name="Superti-Furga G."/>
            <person name="Colinge J."/>
        </authorList>
    </citation>
    <scope>IDENTIFICATION BY MASS SPECTROMETRY [LARGE SCALE ANALYSIS]</scope>
</reference>
<reference key="9">
    <citation type="journal article" date="2012" name="Mol. Biol. Cell">
        <title>MINOS1 is a conserved component of mitofilin complexes and required for mitochondrial function and cristae organization.</title>
        <authorList>
            <person name="Alkhaja A.K."/>
            <person name="Jans D.C."/>
            <person name="Nikolov M."/>
            <person name="Vukotic M."/>
            <person name="Lytovchenko O."/>
            <person name="Ludewig F."/>
            <person name="Schliebs W."/>
            <person name="Riedel D."/>
            <person name="Urlaub H."/>
            <person name="Jakobs S."/>
            <person name="Deckers M."/>
        </authorList>
    </citation>
    <scope>INTERACTION WITH THE MINOS/MITOS COMPLEX</scope>
</reference>
<reference key="10">
    <citation type="journal article" date="2015" name="Elife">
        <title>QIL1 is a novel mitochondrial protein required for MICOS complex stability and cristae morphology.</title>
        <authorList>
            <person name="Guarani V."/>
            <person name="McNeill E.M."/>
            <person name="Paulo J.A."/>
            <person name="Huttlin E.L."/>
            <person name="Froehlich F."/>
            <person name="Gygi S.P."/>
            <person name="Van Vactor D."/>
            <person name="Harper J.W."/>
        </authorList>
    </citation>
    <scope>INTERACTION WITH THE MICOS COMPLEX</scope>
</reference>
<reference key="11">
    <citation type="journal article" date="2015" name="Nat. Cell Biol.">
        <title>USP30 and parkin homeostatically regulate atypical ubiquitin chains on mitochondria.</title>
        <authorList>
            <person name="Cunningham C.N."/>
            <person name="Baughman J.M."/>
            <person name="Phu L."/>
            <person name="Tea J.S."/>
            <person name="Yu C."/>
            <person name="Coons M."/>
            <person name="Kirkpatrick D.S."/>
            <person name="Bingol B."/>
            <person name="Corn J.E."/>
        </authorList>
    </citation>
    <scope>UBIQUITINATION AT LYS-187; LYS-190; LYS-227 AND LYS-317</scope>
</reference>
<reference key="12">
    <citation type="journal article" date="2015" name="Proteomics">
        <title>N-terminome analysis of the human mitochondrial proteome.</title>
        <authorList>
            <person name="Vaca Jacome A.S."/>
            <person name="Rabilloud T."/>
            <person name="Schaeffer-Reiss C."/>
            <person name="Rompais M."/>
            <person name="Ayoub D."/>
            <person name="Lane L."/>
            <person name="Bairoch A."/>
            <person name="Van Dorsselaer A."/>
            <person name="Carapito C."/>
        </authorList>
    </citation>
    <scope>IDENTIFICATION BY MASS SPECTROMETRY [LARGE SCALE ANALYSIS]</scope>
</reference>
<reference key="13">
    <citation type="journal article" date="2019" name="PLoS ONE">
        <title>Armadillo repeat-containing protein 1 is a dual localization protein associated with mitochondrial intermembrane space bridging complex.</title>
        <authorList>
            <person name="Wagner F."/>
            <person name="Kunz T.C."/>
            <person name="Chowdhury S.R."/>
            <person name="Thiede B."/>
            <person name="Fraunholz M."/>
            <person name="Eger D."/>
            <person name="Kozjak-Pavlovic V."/>
        </authorList>
    </citation>
    <scope>INTERACTION WITH ARMC1</scope>
</reference>
<protein>
    <recommendedName>
        <fullName>Metaxin-1</fullName>
    </recommendedName>
    <alternativeName>
        <fullName>Mitochondrial outer membrane import complex protein 1</fullName>
    </alternativeName>
</protein>
<accession>Q13505</accession>
<accession>A0A0A0MRK6</accession>
<accession>B1AVR9</accession>
<accession>B1AVS0</accession>
<accession>B2R9P4</accession>
<accession>Q9BUU3</accession>
<gene>
    <name type="primary">MTX1</name>
    <name type="synonym">MTX</name>
    <name type="synonym">MTXN</name>
</gene>
<dbReference type="EMBL" id="U46920">
    <property type="protein sequence ID" value="AAC50490.1"/>
    <property type="molecule type" value="Genomic_DNA"/>
</dbReference>
<dbReference type="EMBL" id="AF023268">
    <property type="protein sequence ID" value="AAC51819.1"/>
    <property type="molecule type" value="Genomic_DNA"/>
</dbReference>
<dbReference type="EMBL" id="AK313863">
    <property type="protein sequence ID" value="BAG36591.1"/>
    <property type="molecule type" value="mRNA"/>
</dbReference>
<dbReference type="EMBL" id="AC234582">
    <property type="status" value="NOT_ANNOTATED_CDS"/>
    <property type="molecule type" value="Genomic_DNA"/>
</dbReference>
<dbReference type="EMBL" id="CH471121">
    <property type="protein sequence ID" value="EAW53106.1"/>
    <property type="molecule type" value="Genomic_DNA"/>
</dbReference>
<dbReference type="EMBL" id="CH471121">
    <property type="protein sequence ID" value="EAW53105.1"/>
    <property type="molecule type" value="Genomic_DNA"/>
</dbReference>
<dbReference type="EMBL" id="BC001906">
    <property type="protein sequence ID" value="AAH01906.2"/>
    <property type="molecule type" value="mRNA"/>
</dbReference>
<dbReference type="CCDS" id="CCDS1100.1">
    <molecule id="Q13505-1"/>
</dbReference>
<dbReference type="CCDS" id="CCDS1101.1">
    <molecule id="Q13505-2"/>
</dbReference>
<dbReference type="RefSeq" id="NP_002446.3">
    <molecule id="Q13505-1"/>
    <property type="nucleotide sequence ID" value="NM_002455.4"/>
</dbReference>
<dbReference type="RefSeq" id="NP_942584.2">
    <molecule id="Q13505-2"/>
    <property type="nucleotide sequence ID" value="NM_198883.3"/>
</dbReference>
<dbReference type="SMR" id="Q13505"/>
<dbReference type="BioGRID" id="110667">
    <property type="interactions" value="160"/>
</dbReference>
<dbReference type="ComplexPortal" id="CPX-6133">
    <property type="entry name" value="SAM mitochondrial sorting and assembly machinery complex"/>
</dbReference>
<dbReference type="CORUM" id="Q13505"/>
<dbReference type="FunCoup" id="Q13505">
    <property type="interactions" value="2915"/>
</dbReference>
<dbReference type="IntAct" id="Q13505">
    <property type="interactions" value="76"/>
</dbReference>
<dbReference type="MINT" id="Q13505"/>
<dbReference type="STRING" id="9606.ENSP00000357360"/>
<dbReference type="GlyGen" id="Q13505">
    <property type="glycosylation" value="2 sites, 1 O-linked glycan (1 site)"/>
</dbReference>
<dbReference type="iPTMnet" id="Q13505"/>
<dbReference type="PhosphoSitePlus" id="Q13505"/>
<dbReference type="SwissPalm" id="Q13505"/>
<dbReference type="BioMuta" id="MTX1"/>
<dbReference type="DMDM" id="215274027"/>
<dbReference type="jPOST" id="Q13505"/>
<dbReference type="MassIVE" id="Q13505"/>
<dbReference type="PaxDb" id="9606-ENSP00000357360"/>
<dbReference type="PeptideAtlas" id="Q13505"/>
<dbReference type="ProteomicsDB" id="59499">
    <molecule id="Q13505-1"/>
</dbReference>
<dbReference type="ProteomicsDB" id="59500">
    <molecule id="Q13505-2"/>
</dbReference>
<dbReference type="ProteomicsDB" id="59501">
    <molecule id="Q13505-3"/>
</dbReference>
<dbReference type="Pumba" id="Q13505"/>
<dbReference type="TopDownProteomics" id="Q13505-1">
    <molecule id="Q13505-1"/>
</dbReference>
<dbReference type="TopDownProteomics" id="Q13505-3">
    <molecule id="Q13505-3"/>
</dbReference>
<dbReference type="Antibodypedia" id="2611">
    <property type="antibodies" value="129 antibodies from 23 providers"/>
</dbReference>
<dbReference type="DNASU" id="4580"/>
<dbReference type="Ensembl" id="ENST00000316721.8">
    <molecule id="Q13505-2"/>
    <property type="protein sequence ID" value="ENSP00000317106.4"/>
    <property type="gene ID" value="ENSG00000173171.15"/>
</dbReference>
<dbReference type="Ensembl" id="ENST00000368376.8">
    <molecule id="Q13505-1"/>
    <property type="protein sequence ID" value="ENSP00000357360.3"/>
    <property type="gene ID" value="ENSG00000173171.15"/>
</dbReference>
<dbReference type="Ensembl" id="ENST00000609421.1">
    <molecule id="Q13505-3"/>
    <property type="protein sequence ID" value="ENSP00000476632.1"/>
    <property type="gene ID" value="ENSG00000173171.15"/>
</dbReference>
<dbReference type="GeneID" id="4580"/>
<dbReference type="KEGG" id="hsa:4580"/>
<dbReference type="MANE-Select" id="ENST00000368376.8">
    <property type="protein sequence ID" value="ENSP00000357360.3"/>
    <property type="RefSeq nucleotide sequence ID" value="NM_002455.5"/>
    <property type="RefSeq protein sequence ID" value="NP_002446.3"/>
</dbReference>
<dbReference type="UCSC" id="uc001fjb.4">
    <property type="organism name" value="human"/>
</dbReference>
<dbReference type="UCSC" id="uc001fjc.4">
    <molecule id="Q13505-1"/>
    <property type="organism name" value="human"/>
</dbReference>
<dbReference type="AGR" id="HGNC:7504"/>
<dbReference type="CTD" id="4580"/>
<dbReference type="DisGeNET" id="4580"/>
<dbReference type="GeneCards" id="MTX1"/>
<dbReference type="HGNC" id="HGNC:7504">
    <property type="gene designation" value="MTX1"/>
</dbReference>
<dbReference type="HPA" id="ENSG00000173171">
    <property type="expression patterns" value="Low tissue specificity"/>
</dbReference>
<dbReference type="MIM" id="600605">
    <property type="type" value="gene"/>
</dbReference>
<dbReference type="neXtProt" id="NX_Q13505"/>
<dbReference type="OpenTargets" id="ENSG00000173171"/>
<dbReference type="PharmGKB" id="PA31306"/>
<dbReference type="VEuPathDB" id="HostDB:ENSG00000173171"/>
<dbReference type="eggNOG" id="KOG3028">
    <property type="taxonomic scope" value="Eukaryota"/>
</dbReference>
<dbReference type="GeneTree" id="ENSGT00950000182919"/>
<dbReference type="HOGENOM" id="CLU_044137_5_0_1"/>
<dbReference type="InParanoid" id="Q13505"/>
<dbReference type="OMA" id="PIPFNFY"/>
<dbReference type="OrthoDB" id="5835136at2759"/>
<dbReference type="PAN-GO" id="Q13505">
    <property type="GO annotations" value="3 GO annotations based on evolutionary models"/>
</dbReference>
<dbReference type="PhylomeDB" id="Q13505"/>
<dbReference type="TreeFam" id="TF313422"/>
<dbReference type="PathwayCommons" id="Q13505"/>
<dbReference type="Reactome" id="R-HSA-1268020">
    <property type="pathway name" value="Mitochondrial protein import"/>
</dbReference>
<dbReference type="Reactome" id="R-HSA-8949613">
    <property type="pathway name" value="Cristae formation"/>
</dbReference>
<dbReference type="Reactome" id="R-HSA-9013404">
    <property type="pathway name" value="RAC2 GTPase cycle"/>
</dbReference>
<dbReference type="SignaLink" id="Q13505"/>
<dbReference type="SIGNOR" id="Q13505"/>
<dbReference type="BioGRID-ORCS" id="4580">
    <property type="hits" value="25 hits in 1161 CRISPR screens"/>
</dbReference>
<dbReference type="CD-CODE" id="91857CE7">
    <property type="entry name" value="Nucleolus"/>
</dbReference>
<dbReference type="CD-CODE" id="FB4E32DD">
    <property type="entry name" value="Presynaptic clusters and postsynaptic densities"/>
</dbReference>
<dbReference type="ChiTaRS" id="MTX1">
    <property type="organism name" value="human"/>
</dbReference>
<dbReference type="GeneWiki" id="MTX1"/>
<dbReference type="GenomeRNAi" id="4580"/>
<dbReference type="Pharos" id="Q13505">
    <property type="development level" value="Tbio"/>
</dbReference>
<dbReference type="PRO" id="PR:Q13505"/>
<dbReference type="Proteomes" id="UP000005640">
    <property type="component" value="Chromosome 1"/>
</dbReference>
<dbReference type="RNAct" id="Q13505">
    <property type="molecule type" value="protein"/>
</dbReference>
<dbReference type="Bgee" id="ENSG00000173171">
    <property type="expression patterns" value="Expressed in right testis and 100 other cell types or tissues"/>
</dbReference>
<dbReference type="ExpressionAtlas" id="Q13505">
    <property type="expression patterns" value="baseline and differential"/>
</dbReference>
<dbReference type="GO" id="GO:0005737">
    <property type="term" value="C:cytoplasm"/>
    <property type="evidence" value="ECO:0000318"/>
    <property type="project" value="GO_Central"/>
</dbReference>
<dbReference type="GO" id="GO:0016020">
    <property type="term" value="C:membrane"/>
    <property type="evidence" value="ECO:0000304"/>
    <property type="project" value="ProtInc"/>
</dbReference>
<dbReference type="GO" id="GO:0140275">
    <property type="term" value="C:MIB complex"/>
    <property type="evidence" value="ECO:0007005"/>
    <property type="project" value="UniProtKB"/>
</dbReference>
<dbReference type="GO" id="GO:0005741">
    <property type="term" value="C:mitochondrial outer membrane"/>
    <property type="evidence" value="ECO:0000303"/>
    <property type="project" value="ComplexPortal"/>
</dbReference>
<dbReference type="GO" id="GO:0005739">
    <property type="term" value="C:mitochondrion"/>
    <property type="evidence" value="ECO:0006056"/>
    <property type="project" value="FlyBase"/>
</dbReference>
<dbReference type="GO" id="GO:0001401">
    <property type="term" value="C:SAM complex"/>
    <property type="evidence" value="ECO:0000353"/>
    <property type="project" value="ComplexPortal"/>
</dbReference>
<dbReference type="GO" id="GO:0007007">
    <property type="term" value="P:inner mitochondrial membrane organization"/>
    <property type="evidence" value="ECO:0000305"/>
    <property type="project" value="UniProtKB"/>
</dbReference>
<dbReference type="GO" id="GO:0007595">
    <property type="term" value="P:lactation"/>
    <property type="evidence" value="ECO:0007669"/>
    <property type="project" value="Ensembl"/>
</dbReference>
<dbReference type="GO" id="GO:0007005">
    <property type="term" value="P:mitochondrion organization"/>
    <property type="evidence" value="ECO:0000318"/>
    <property type="project" value="GO_Central"/>
</dbReference>
<dbReference type="GO" id="GO:0045040">
    <property type="term" value="P:protein insertion into mitochondrial outer membrane"/>
    <property type="evidence" value="ECO:0000303"/>
    <property type="project" value="ComplexPortal"/>
</dbReference>
<dbReference type="CDD" id="cd03212">
    <property type="entry name" value="GST_C_Metaxin1_3"/>
    <property type="match status" value="1"/>
</dbReference>
<dbReference type="CDD" id="cd03078">
    <property type="entry name" value="GST_N_Metaxin1_like"/>
    <property type="match status" value="1"/>
</dbReference>
<dbReference type="Gene3D" id="1.20.1050.10">
    <property type="match status" value="1"/>
</dbReference>
<dbReference type="InterPro" id="IPR036282">
    <property type="entry name" value="Glutathione-S-Trfase_C_sf"/>
</dbReference>
<dbReference type="InterPro" id="IPR040079">
    <property type="entry name" value="Glutathione_S-Trfase"/>
</dbReference>
<dbReference type="InterPro" id="IPR033468">
    <property type="entry name" value="Metaxin_GST"/>
</dbReference>
<dbReference type="InterPro" id="IPR050931">
    <property type="entry name" value="Mito_Protein_Transport_Metaxin"/>
</dbReference>
<dbReference type="InterPro" id="IPR019564">
    <property type="entry name" value="Sam37/metaxin_N"/>
</dbReference>
<dbReference type="PANTHER" id="PTHR12289">
    <property type="entry name" value="METAXIN RELATED"/>
    <property type="match status" value="1"/>
</dbReference>
<dbReference type="PANTHER" id="PTHR12289:SF34">
    <property type="entry name" value="METAXIN-1"/>
    <property type="match status" value="1"/>
</dbReference>
<dbReference type="Pfam" id="PF17171">
    <property type="entry name" value="GST_C_6"/>
    <property type="match status" value="1"/>
</dbReference>
<dbReference type="Pfam" id="PF10568">
    <property type="entry name" value="Tom37"/>
    <property type="match status" value="1"/>
</dbReference>
<dbReference type="SFLD" id="SFLDS00019">
    <property type="entry name" value="Glutathione_Transferase_(cytos"/>
    <property type="match status" value="1"/>
</dbReference>
<dbReference type="SFLD" id="SFLDG01180">
    <property type="entry name" value="SUF1"/>
    <property type="match status" value="1"/>
</dbReference>
<dbReference type="SUPFAM" id="SSF47616">
    <property type="entry name" value="GST C-terminal domain-like"/>
    <property type="match status" value="1"/>
</dbReference>
<organism>
    <name type="scientific">Homo sapiens</name>
    <name type="common">Human</name>
    <dbReference type="NCBI Taxonomy" id="9606"/>
    <lineage>
        <taxon>Eukaryota</taxon>
        <taxon>Metazoa</taxon>
        <taxon>Chordata</taxon>
        <taxon>Craniata</taxon>
        <taxon>Vertebrata</taxon>
        <taxon>Euteleostomi</taxon>
        <taxon>Mammalia</taxon>
        <taxon>Eutheria</taxon>
        <taxon>Euarchontoglires</taxon>
        <taxon>Primates</taxon>
        <taxon>Haplorrhini</taxon>
        <taxon>Catarrhini</taxon>
        <taxon>Hominidae</taxon>
        <taxon>Homo</taxon>
    </lineage>
</organism>
<feature type="chain" id="PRO_0000220991" description="Metaxin-1">
    <location>
        <begin position="1"/>
        <end position="466"/>
    </location>
</feature>
<feature type="transmembrane region" description="Helical" evidence="2">
    <location>
        <begin position="421"/>
        <end position="441"/>
    </location>
</feature>
<feature type="region of interest" description="Disordered" evidence="3">
    <location>
        <begin position="1"/>
        <end position="133"/>
    </location>
</feature>
<feature type="compositionally biased region" description="Low complexity" evidence="3">
    <location>
        <begin position="1"/>
        <end position="19"/>
    </location>
</feature>
<feature type="compositionally biased region" description="Polar residues" evidence="3">
    <location>
        <begin position="20"/>
        <end position="36"/>
    </location>
</feature>
<feature type="compositionally biased region" description="Low complexity" evidence="3">
    <location>
        <begin position="90"/>
        <end position="110"/>
    </location>
</feature>
<feature type="cross-link" description="Glycyl lysine isopeptide (Lys-Gly) (interchain with G-Cter in ubiquitin)" evidence="6">
    <location>
        <position position="187"/>
    </location>
</feature>
<feature type="cross-link" description="Glycyl lysine isopeptide (Lys-Gly) (interchain with G-Cter in ubiquitin)" evidence="6">
    <location>
        <position position="190"/>
    </location>
</feature>
<feature type="cross-link" description="Glycyl lysine isopeptide (Lys-Gly) (interchain with G-Cter in ubiquitin)" evidence="6">
    <location>
        <position position="227"/>
    </location>
</feature>
<feature type="cross-link" description="Glycyl lysine isopeptide (Lys-Gly) (interchain with G-Cter in ubiquitin)" evidence="6">
    <location>
        <position position="317"/>
    </location>
</feature>
<feature type="splice variant" id="VSP_035741" description="In isoform 3." evidence="9 11">
    <location>
        <begin position="1"/>
        <end position="149"/>
    </location>
</feature>
<feature type="splice variant" id="VSP_035742" description="In isoform 2." evidence="10">
    <location>
        <begin position="227"/>
        <end position="257"/>
    </location>
</feature>
<feature type="sequence variant" id="VAR_047376" description="In dbSNP:rs760077.">
    <original>S</original>
    <variation>T</variation>
    <location>
        <position position="63"/>
    </location>
</feature>